<feature type="chain" id="PRO_0000110727" description="Orotate phosphoribosyltransferase">
    <location>
        <begin position="1"/>
        <end position="226"/>
    </location>
</feature>
<feature type="binding site" description="in other chain" evidence="1">
    <location>
        <position position="29"/>
    </location>
    <ligand>
        <name>5-phospho-alpha-D-ribose 1-diphosphate</name>
        <dbReference type="ChEBI" id="CHEBI:58017"/>
        <note>ligand shared between dimeric partners</note>
    </ligand>
</feature>
<feature type="binding site" evidence="1">
    <location>
        <begin position="37"/>
        <end position="38"/>
    </location>
    <ligand>
        <name>orotate</name>
        <dbReference type="ChEBI" id="CHEBI:30839"/>
    </ligand>
</feature>
<feature type="binding site" description="in other chain" evidence="1">
    <location>
        <begin position="75"/>
        <end position="76"/>
    </location>
    <ligand>
        <name>5-phospho-alpha-D-ribose 1-diphosphate</name>
        <dbReference type="ChEBI" id="CHEBI:58017"/>
        <note>ligand shared between dimeric partners</note>
    </ligand>
</feature>
<feature type="binding site" evidence="1">
    <location>
        <position position="101"/>
    </location>
    <ligand>
        <name>5-phospho-alpha-D-ribose 1-diphosphate</name>
        <dbReference type="ChEBI" id="CHEBI:58017"/>
        <note>ligand shared between dimeric partners</note>
    </ligand>
</feature>
<feature type="binding site" description="in other chain" evidence="1">
    <location>
        <position position="102"/>
    </location>
    <ligand>
        <name>5-phospho-alpha-D-ribose 1-diphosphate</name>
        <dbReference type="ChEBI" id="CHEBI:58017"/>
        <note>ligand shared between dimeric partners</note>
    </ligand>
</feature>
<feature type="binding site" evidence="1">
    <location>
        <position position="105"/>
    </location>
    <ligand>
        <name>5-phospho-alpha-D-ribose 1-diphosphate</name>
        <dbReference type="ChEBI" id="CHEBI:58017"/>
        <note>ligand shared between dimeric partners</note>
    </ligand>
</feature>
<feature type="binding site" evidence="1">
    <location>
        <position position="107"/>
    </location>
    <ligand>
        <name>5-phospho-alpha-D-ribose 1-diphosphate</name>
        <dbReference type="ChEBI" id="CHEBI:58017"/>
        <note>ligand shared between dimeric partners</note>
    </ligand>
</feature>
<feature type="binding site" description="in other chain" evidence="1">
    <location>
        <begin position="126"/>
        <end position="134"/>
    </location>
    <ligand>
        <name>5-phospho-alpha-D-ribose 1-diphosphate</name>
        <dbReference type="ChEBI" id="CHEBI:58017"/>
        <note>ligand shared between dimeric partners</note>
    </ligand>
</feature>
<feature type="binding site" evidence="1">
    <location>
        <position position="130"/>
    </location>
    <ligand>
        <name>orotate</name>
        <dbReference type="ChEBI" id="CHEBI:30839"/>
    </ligand>
</feature>
<feature type="binding site" evidence="1">
    <location>
        <position position="158"/>
    </location>
    <ligand>
        <name>orotate</name>
        <dbReference type="ChEBI" id="CHEBI:30839"/>
    </ligand>
</feature>
<name>PYRE_RALN1</name>
<dbReference type="EC" id="2.4.2.10" evidence="1"/>
<dbReference type="EMBL" id="AL646052">
    <property type="protein sequence ID" value="CAD13667.1"/>
    <property type="status" value="ALT_INIT"/>
    <property type="molecule type" value="Genomic_DNA"/>
</dbReference>
<dbReference type="RefSeq" id="WP_016722549.1">
    <property type="nucleotide sequence ID" value="NC_003295.1"/>
</dbReference>
<dbReference type="SMR" id="Q8Y342"/>
<dbReference type="STRING" id="267608.RSc0139"/>
<dbReference type="EnsemblBacteria" id="CAD13667">
    <property type="protein sequence ID" value="CAD13667"/>
    <property type="gene ID" value="RSc0139"/>
</dbReference>
<dbReference type="KEGG" id="rso:RSc0139"/>
<dbReference type="eggNOG" id="COG0461">
    <property type="taxonomic scope" value="Bacteria"/>
</dbReference>
<dbReference type="HOGENOM" id="CLU_074878_0_1_4"/>
<dbReference type="UniPathway" id="UPA00070">
    <property type="reaction ID" value="UER00119"/>
</dbReference>
<dbReference type="Proteomes" id="UP000001436">
    <property type="component" value="Chromosome"/>
</dbReference>
<dbReference type="GO" id="GO:0005737">
    <property type="term" value="C:cytoplasm"/>
    <property type="evidence" value="ECO:0007669"/>
    <property type="project" value="TreeGrafter"/>
</dbReference>
<dbReference type="GO" id="GO:0000287">
    <property type="term" value="F:magnesium ion binding"/>
    <property type="evidence" value="ECO:0007669"/>
    <property type="project" value="UniProtKB-UniRule"/>
</dbReference>
<dbReference type="GO" id="GO:0004588">
    <property type="term" value="F:orotate phosphoribosyltransferase activity"/>
    <property type="evidence" value="ECO:0007669"/>
    <property type="project" value="UniProtKB-UniRule"/>
</dbReference>
<dbReference type="GO" id="GO:0006207">
    <property type="term" value="P:'de novo' pyrimidine nucleobase biosynthetic process"/>
    <property type="evidence" value="ECO:0007669"/>
    <property type="project" value="TreeGrafter"/>
</dbReference>
<dbReference type="GO" id="GO:0044205">
    <property type="term" value="P:'de novo' UMP biosynthetic process"/>
    <property type="evidence" value="ECO:0007669"/>
    <property type="project" value="UniProtKB-UniRule"/>
</dbReference>
<dbReference type="GO" id="GO:0046132">
    <property type="term" value="P:pyrimidine ribonucleoside biosynthetic process"/>
    <property type="evidence" value="ECO:0007669"/>
    <property type="project" value="TreeGrafter"/>
</dbReference>
<dbReference type="CDD" id="cd06223">
    <property type="entry name" value="PRTases_typeI"/>
    <property type="match status" value="1"/>
</dbReference>
<dbReference type="FunFam" id="3.40.50.2020:FF:000008">
    <property type="entry name" value="Orotate phosphoribosyltransferase"/>
    <property type="match status" value="1"/>
</dbReference>
<dbReference type="Gene3D" id="3.40.50.2020">
    <property type="match status" value="1"/>
</dbReference>
<dbReference type="HAMAP" id="MF_01208">
    <property type="entry name" value="PyrE"/>
    <property type="match status" value="1"/>
</dbReference>
<dbReference type="InterPro" id="IPR023031">
    <property type="entry name" value="OPRT"/>
</dbReference>
<dbReference type="InterPro" id="IPR004467">
    <property type="entry name" value="Or_phspho_trans_dom"/>
</dbReference>
<dbReference type="InterPro" id="IPR000836">
    <property type="entry name" value="PRibTrfase_dom"/>
</dbReference>
<dbReference type="InterPro" id="IPR029057">
    <property type="entry name" value="PRTase-like"/>
</dbReference>
<dbReference type="NCBIfam" id="TIGR00336">
    <property type="entry name" value="pyrE"/>
    <property type="match status" value="1"/>
</dbReference>
<dbReference type="PANTHER" id="PTHR46683">
    <property type="entry name" value="OROTATE PHOSPHORIBOSYLTRANSFERASE 1-RELATED"/>
    <property type="match status" value="1"/>
</dbReference>
<dbReference type="PANTHER" id="PTHR46683:SF1">
    <property type="entry name" value="OROTATE PHOSPHORIBOSYLTRANSFERASE 1-RELATED"/>
    <property type="match status" value="1"/>
</dbReference>
<dbReference type="Pfam" id="PF00156">
    <property type="entry name" value="Pribosyltran"/>
    <property type="match status" value="1"/>
</dbReference>
<dbReference type="SUPFAM" id="SSF53271">
    <property type="entry name" value="PRTase-like"/>
    <property type="match status" value="1"/>
</dbReference>
<dbReference type="PROSITE" id="PS00103">
    <property type="entry name" value="PUR_PYR_PR_TRANSFER"/>
    <property type="match status" value="1"/>
</dbReference>
<accession>Q8Y342</accession>
<comment type="function">
    <text evidence="1">Catalyzes the transfer of a ribosyl phosphate group from 5-phosphoribose 1-diphosphate to orotate, leading to the formation of orotidine monophosphate (OMP).</text>
</comment>
<comment type="catalytic activity">
    <reaction evidence="1">
        <text>orotidine 5'-phosphate + diphosphate = orotate + 5-phospho-alpha-D-ribose 1-diphosphate</text>
        <dbReference type="Rhea" id="RHEA:10380"/>
        <dbReference type="ChEBI" id="CHEBI:30839"/>
        <dbReference type="ChEBI" id="CHEBI:33019"/>
        <dbReference type="ChEBI" id="CHEBI:57538"/>
        <dbReference type="ChEBI" id="CHEBI:58017"/>
        <dbReference type="EC" id="2.4.2.10"/>
    </reaction>
</comment>
<comment type="cofactor">
    <cofactor evidence="1">
        <name>Mg(2+)</name>
        <dbReference type="ChEBI" id="CHEBI:18420"/>
    </cofactor>
</comment>
<comment type="pathway">
    <text evidence="1">Pyrimidine metabolism; UMP biosynthesis via de novo pathway; UMP from orotate: step 1/2.</text>
</comment>
<comment type="subunit">
    <text evidence="1">Homodimer.</text>
</comment>
<comment type="similarity">
    <text evidence="1">Belongs to the purine/pyrimidine phosphoribosyltransferase family. PyrE subfamily.</text>
</comment>
<comment type="sequence caution" evidence="2">
    <conflict type="erroneous initiation">
        <sequence resource="EMBL-CDS" id="CAD13667"/>
    </conflict>
</comment>
<proteinExistence type="inferred from homology"/>
<reference key="1">
    <citation type="journal article" date="2002" name="Nature">
        <title>Genome sequence of the plant pathogen Ralstonia solanacearum.</title>
        <authorList>
            <person name="Salanoubat M."/>
            <person name="Genin S."/>
            <person name="Artiguenave F."/>
            <person name="Gouzy J."/>
            <person name="Mangenot S."/>
            <person name="Arlat M."/>
            <person name="Billault A."/>
            <person name="Brottier P."/>
            <person name="Camus J.-C."/>
            <person name="Cattolico L."/>
            <person name="Chandler M."/>
            <person name="Choisne N."/>
            <person name="Claudel-Renard C."/>
            <person name="Cunnac S."/>
            <person name="Demange N."/>
            <person name="Gaspin C."/>
            <person name="Lavie M."/>
            <person name="Moisan A."/>
            <person name="Robert C."/>
            <person name="Saurin W."/>
            <person name="Schiex T."/>
            <person name="Siguier P."/>
            <person name="Thebault P."/>
            <person name="Whalen M."/>
            <person name="Wincker P."/>
            <person name="Levy M."/>
            <person name="Weissenbach J."/>
            <person name="Boucher C.A."/>
        </authorList>
    </citation>
    <scope>NUCLEOTIDE SEQUENCE [LARGE SCALE GENOMIC DNA]</scope>
    <source>
        <strain>ATCC BAA-1114 / GMI1000</strain>
    </source>
</reference>
<evidence type="ECO:0000255" key="1">
    <source>
        <dbReference type="HAMAP-Rule" id="MF_01208"/>
    </source>
</evidence>
<evidence type="ECO:0000305" key="2"/>
<sequence>MSQNSELRQSFIRFAVEAGVLSFGEFVTKAGRTSPYFFNAGKFSDGALLGQVAQFYAKTLLDSGVQFDMLFGPAYKGITLASATAVALAGMGRNVGFAYNRKEAKDHGEGGSLVGAKLQGRVVIVDDVISAGTSVRESVELIRNAGATPAAVLILMDRMERSGNAVDIGERSAVQDVQAQYGMPVVSIANLDDLLGYLDHAGDPALAGYRAKAAAYRDKYGVSAVV</sequence>
<gene>
    <name evidence="1" type="primary">pyrE</name>
    <name type="ordered locus">RSc0139</name>
    <name type="ORF">RS01009</name>
</gene>
<organism>
    <name type="scientific">Ralstonia nicotianae (strain ATCC BAA-1114 / GMI1000)</name>
    <name type="common">Ralstonia solanacearum</name>
    <dbReference type="NCBI Taxonomy" id="267608"/>
    <lineage>
        <taxon>Bacteria</taxon>
        <taxon>Pseudomonadati</taxon>
        <taxon>Pseudomonadota</taxon>
        <taxon>Betaproteobacteria</taxon>
        <taxon>Burkholderiales</taxon>
        <taxon>Burkholderiaceae</taxon>
        <taxon>Ralstonia</taxon>
        <taxon>Ralstonia solanacearum species complex</taxon>
    </lineage>
</organism>
<protein>
    <recommendedName>
        <fullName evidence="1">Orotate phosphoribosyltransferase</fullName>
        <shortName evidence="1">OPRT</shortName>
        <shortName evidence="1">OPRTase</shortName>
        <ecNumber evidence="1">2.4.2.10</ecNumber>
    </recommendedName>
</protein>
<keyword id="KW-0328">Glycosyltransferase</keyword>
<keyword id="KW-0460">Magnesium</keyword>
<keyword id="KW-0665">Pyrimidine biosynthesis</keyword>
<keyword id="KW-1185">Reference proteome</keyword>
<keyword id="KW-0808">Transferase</keyword>